<dbReference type="EMBL" id="AL023094">
    <property type="protein sequence ID" value="CAA18855.1"/>
    <property type="molecule type" value="Genomic_DNA"/>
</dbReference>
<dbReference type="EMBL" id="AL161586">
    <property type="protein sequence ID" value="CAB80193.1"/>
    <property type="molecule type" value="Genomic_DNA"/>
</dbReference>
<dbReference type="EMBL" id="CP002687">
    <property type="protein sequence ID" value="AEE86420.1"/>
    <property type="molecule type" value="Genomic_DNA"/>
</dbReference>
<dbReference type="EMBL" id="AY042802">
    <property type="protein sequence ID" value="AAK68742.2"/>
    <property type="molecule type" value="mRNA"/>
</dbReference>
<dbReference type="EMBL" id="BT000358">
    <property type="protein sequence ID" value="AAN15677.1"/>
    <property type="molecule type" value="mRNA"/>
</dbReference>
<dbReference type="EMBL" id="AY084348">
    <property type="protein sequence ID" value="AAM60931.1"/>
    <property type="molecule type" value="mRNA"/>
</dbReference>
<dbReference type="PIR" id="T05296">
    <property type="entry name" value="T05296"/>
</dbReference>
<dbReference type="RefSeq" id="NP_195202.1">
    <property type="nucleotide sequence ID" value="NM_119642.4"/>
</dbReference>
<dbReference type="SMR" id="O65695"/>
<dbReference type="FunCoup" id="O65695">
    <property type="interactions" value="330"/>
</dbReference>
<dbReference type="STRING" id="3702.O65695"/>
<dbReference type="PaxDb" id="3702-AT4G34760.1"/>
<dbReference type="EnsemblPlants" id="AT4G34760.1">
    <property type="protein sequence ID" value="AT4G34760.1"/>
    <property type="gene ID" value="AT4G34760"/>
</dbReference>
<dbReference type="GeneID" id="829628"/>
<dbReference type="Gramene" id="AT4G34760.1">
    <property type="protein sequence ID" value="AT4G34760.1"/>
    <property type="gene ID" value="AT4G34760"/>
</dbReference>
<dbReference type="KEGG" id="ath:AT4G34760"/>
<dbReference type="Araport" id="AT4G34760"/>
<dbReference type="TAIR" id="AT4G34760">
    <property type="gene designation" value="SAUR50"/>
</dbReference>
<dbReference type="eggNOG" id="ENOG502RZ3M">
    <property type="taxonomic scope" value="Eukaryota"/>
</dbReference>
<dbReference type="HOGENOM" id="CLU_098106_2_3_1"/>
<dbReference type="InParanoid" id="O65695"/>
<dbReference type="OMA" id="YSAFAEC"/>
<dbReference type="PhylomeDB" id="O65695"/>
<dbReference type="PRO" id="PR:O65695"/>
<dbReference type="Proteomes" id="UP000006548">
    <property type="component" value="Chromosome 4"/>
</dbReference>
<dbReference type="ExpressionAtlas" id="O65695">
    <property type="expression patterns" value="baseline and differential"/>
</dbReference>
<dbReference type="GO" id="GO:0005886">
    <property type="term" value="C:plasma membrane"/>
    <property type="evidence" value="ECO:0007669"/>
    <property type="project" value="UniProtKB-SubCell"/>
</dbReference>
<dbReference type="GO" id="GO:0009734">
    <property type="term" value="P:auxin-activated signaling pathway"/>
    <property type="evidence" value="ECO:0007669"/>
    <property type="project" value="UniProtKB-KW"/>
</dbReference>
<dbReference type="GO" id="GO:0009733">
    <property type="term" value="P:response to auxin"/>
    <property type="evidence" value="ECO:0000270"/>
    <property type="project" value="UniProtKB"/>
</dbReference>
<dbReference type="GO" id="GO:0009741">
    <property type="term" value="P:response to brassinosteroid"/>
    <property type="evidence" value="ECO:0000270"/>
    <property type="project" value="UniProtKB"/>
</dbReference>
<dbReference type="InterPro" id="IPR003676">
    <property type="entry name" value="SAUR_fam"/>
</dbReference>
<dbReference type="PANTHER" id="PTHR31929">
    <property type="entry name" value="SAUR-LIKE AUXIN-RESPONSIVE PROTEIN FAMILY-RELATED"/>
    <property type="match status" value="1"/>
</dbReference>
<dbReference type="Pfam" id="PF02519">
    <property type="entry name" value="Auxin_inducible"/>
    <property type="match status" value="1"/>
</dbReference>
<accession>O65695</accession>
<accession>Q94B76</accession>
<protein>
    <recommendedName>
        <fullName evidence="8">Auxin-responsive protein SAUR50</fullName>
    </recommendedName>
    <alternativeName>
        <fullName evidence="8">Protein SMALL AUXIN UP-REGULATED RNA 50</fullName>
    </alternativeName>
</protein>
<feature type="chain" id="PRO_0000437983" description="Auxin-responsive protein SAUR50">
    <location>
        <begin position="1"/>
        <end position="107"/>
    </location>
</feature>
<feature type="sequence conflict" description="In Ref. 3; AAK68742/AAN15677." evidence="9" ref="3">
    <original>K</original>
    <variation>E</variation>
    <location>
        <position position="17"/>
    </location>
</feature>
<gene>
    <name evidence="8" type="primary">SAUR50</name>
    <name evidence="11" type="ordered locus">At4g34760</name>
    <name evidence="12" type="ORF">T4L20.340</name>
</gene>
<organism>
    <name type="scientific">Arabidopsis thaliana</name>
    <name type="common">Mouse-ear cress</name>
    <dbReference type="NCBI Taxonomy" id="3702"/>
    <lineage>
        <taxon>Eukaryota</taxon>
        <taxon>Viridiplantae</taxon>
        <taxon>Streptophyta</taxon>
        <taxon>Embryophyta</taxon>
        <taxon>Tracheophyta</taxon>
        <taxon>Spermatophyta</taxon>
        <taxon>Magnoliopsida</taxon>
        <taxon>eudicotyledons</taxon>
        <taxon>Gunneridae</taxon>
        <taxon>Pentapetalae</taxon>
        <taxon>rosids</taxon>
        <taxon>malvids</taxon>
        <taxon>Brassicales</taxon>
        <taxon>Brassicaceae</taxon>
        <taxon>Camelineae</taxon>
        <taxon>Arabidopsis</taxon>
    </lineage>
</organism>
<proteinExistence type="evidence at protein level"/>
<keyword id="KW-0927">Auxin signaling pathway</keyword>
<keyword id="KW-1003">Cell membrane</keyword>
<keyword id="KW-0217">Developmental protein</keyword>
<keyword id="KW-0341">Growth regulation</keyword>
<keyword id="KW-0472">Membrane</keyword>
<keyword id="KW-1185">Reference proteome</keyword>
<evidence type="ECO:0000250" key="1">
    <source>
        <dbReference type="UniProtKB" id="O65648"/>
    </source>
</evidence>
<evidence type="ECO:0000250" key="2">
    <source>
        <dbReference type="UniProtKB" id="Q9FJG1"/>
    </source>
</evidence>
<evidence type="ECO:0000250" key="3">
    <source>
        <dbReference type="UniProtKB" id="Q9SI60"/>
    </source>
</evidence>
<evidence type="ECO:0000269" key="4">
    <source>
    </source>
</evidence>
<evidence type="ECO:0000269" key="5">
    <source>
    </source>
</evidence>
<evidence type="ECO:0000269" key="6">
    <source>
    </source>
</evidence>
<evidence type="ECO:0000269" key="7">
    <source>
    </source>
</evidence>
<evidence type="ECO:0000303" key="8">
    <source>
    </source>
</evidence>
<evidence type="ECO:0000305" key="9"/>
<evidence type="ECO:0000305" key="10">
    <source>
    </source>
</evidence>
<evidence type="ECO:0000312" key="11">
    <source>
        <dbReference type="Araport" id="AT4G34760"/>
    </source>
</evidence>
<evidence type="ECO:0000312" key="12">
    <source>
        <dbReference type="EMBL" id="CAA18855.1"/>
    </source>
</evidence>
<reference key="1">
    <citation type="journal article" date="1999" name="Nature">
        <title>Sequence and analysis of chromosome 4 of the plant Arabidopsis thaliana.</title>
        <authorList>
            <person name="Mayer K.F.X."/>
            <person name="Schueller C."/>
            <person name="Wambutt R."/>
            <person name="Murphy G."/>
            <person name="Volckaert G."/>
            <person name="Pohl T."/>
            <person name="Duesterhoeft A."/>
            <person name="Stiekema W."/>
            <person name="Entian K.-D."/>
            <person name="Terryn N."/>
            <person name="Harris B."/>
            <person name="Ansorge W."/>
            <person name="Brandt P."/>
            <person name="Grivell L.A."/>
            <person name="Rieger M."/>
            <person name="Weichselgartner M."/>
            <person name="de Simone V."/>
            <person name="Obermaier B."/>
            <person name="Mache R."/>
            <person name="Mueller M."/>
            <person name="Kreis M."/>
            <person name="Delseny M."/>
            <person name="Puigdomenech P."/>
            <person name="Watson M."/>
            <person name="Schmidtheini T."/>
            <person name="Reichert B."/>
            <person name="Portetelle D."/>
            <person name="Perez-Alonso M."/>
            <person name="Boutry M."/>
            <person name="Bancroft I."/>
            <person name="Vos P."/>
            <person name="Hoheisel J."/>
            <person name="Zimmermann W."/>
            <person name="Wedler H."/>
            <person name="Ridley P."/>
            <person name="Langham S.-A."/>
            <person name="McCullagh B."/>
            <person name="Bilham L."/>
            <person name="Robben J."/>
            <person name="van der Schueren J."/>
            <person name="Grymonprez B."/>
            <person name="Chuang Y.-J."/>
            <person name="Vandenbussche F."/>
            <person name="Braeken M."/>
            <person name="Weltjens I."/>
            <person name="Voet M."/>
            <person name="Bastiaens I."/>
            <person name="Aert R."/>
            <person name="Defoor E."/>
            <person name="Weitzenegger T."/>
            <person name="Bothe G."/>
            <person name="Ramsperger U."/>
            <person name="Hilbert H."/>
            <person name="Braun M."/>
            <person name="Holzer E."/>
            <person name="Brandt A."/>
            <person name="Peters S."/>
            <person name="van Staveren M."/>
            <person name="Dirkse W."/>
            <person name="Mooijman P."/>
            <person name="Klein Lankhorst R."/>
            <person name="Rose M."/>
            <person name="Hauf J."/>
            <person name="Koetter P."/>
            <person name="Berneiser S."/>
            <person name="Hempel S."/>
            <person name="Feldpausch M."/>
            <person name="Lamberth S."/>
            <person name="Van den Daele H."/>
            <person name="De Keyser A."/>
            <person name="Buysshaert C."/>
            <person name="Gielen J."/>
            <person name="Villarroel R."/>
            <person name="De Clercq R."/>
            <person name="van Montagu M."/>
            <person name="Rogers J."/>
            <person name="Cronin A."/>
            <person name="Quail M.A."/>
            <person name="Bray-Allen S."/>
            <person name="Clark L."/>
            <person name="Doggett J."/>
            <person name="Hall S."/>
            <person name="Kay M."/>
            <person name="Lennard N."/>
            <person name="McLay K."/>
            <person name="Mayes R."/>
            <person name="Pettett A."/>
            <person name="Rajandream M.A."/>
            <person name="Lyne M."/>
            <person name="Benes V."/>
            <person name="Rechmann S."/>
            <person name="Borkova D."/>
            <person name="Bloecker H."/>
            <person name="Scharfe M."/>
            <person name="Grimm M."/>
            <person name="Loehnert T.-H."/>
            <person name="Dose S."/>
            <person name="de Haan M."/>
            <person name="Maarse A.C."/>
            <person name="Schaefer M."/>
            <person name="Mueller-Auer S."/>
            <person name="Gabel C."/>
            <person name="Fuchs M."/>
            <person name="Fartmann B."/>
            <person name="Granderath K."/>
            <person name="Dauner D."/>
            <person name="Herzl A."/>
            <person name="Neumann S."/>
            <person name="Argiriou A."/>
            <person name="Vitale D."/>
            <person name="Liguori R."/>
            <person name="Piravandi E."/>
            <person name="Massenet O."/>
            <person name="Quigley F."/>
            <person name="Clabauld G."/>
            <person name="Muendlein A."/>
            <person name="Felber R."/>
            <person name="Schnabl S."/>
            <person name="Hiller R."/>
            <person name="Schmidt W."/>
            <person name="Lecharny A."/>
            <person name="Aubourg S."/>
            <person name="Chefdor F."/>
            <person name="Cooke R."/>
            <person name="Berger C."/>
            <person name="Monfort A."/>
            <person name="Casacuberta E."/>
            <person name="Gibbons T."/>
            <person name="Weber N."/>
            <person name="Vandenbol M."/>
            <person name="Bargues M."/>
            <person name="Terol J."/>
            <person name="Torres A."/>
            <person name="Perez-Perez A."/>
            <person name="Purnelle B."/>
            <person name="Bent E."/>
            <person name="Johnson S."/>
            <person name="Tacon D."/>
            <person name="Jesse T."/>
            <person name="Heijnen L."/>
            <person name="Schwarz S."/>
            <person name="Scholler P."/>
            <person name="Heber S."/>
            <person name="Francs P."/>
            <person name="Bielke C."/>
            <person name="Frishman D."/>
            <person name="Haase D."/>
            <person name="Lemcke K."/>
            <person name="Mewes H.-W."/>
            <person name="Stocker S."/>
            <person name="Zaccaria P."/>
            <person name="Bevan M."/>
            <person name="Wilson R.K."/>
            <person name="de la Bastide M."/>
            <person name="Habermann K."/>
            <person name="Parnell L."/>
            <person name="Dedhia N."/>
            <person name="Gnoj L."/>
            <person name="Schutz K."/>
            <person name="Huang E."/>
            <person name="Spiegel L."/>
            <person name="Sekhon M."/>
            <person name="Murray J."/>
            <person name="Sheet P."/>
            <person name="Cordes M."/>
            <person name="Abu-Threideh J."/>
            <person name="Stoneking T."/>
            <person name="Kalicki J."/>
            <person name="Graves T."/>
            <person name="Harmon G."/>
            <person name="Edwards J."/>
            <person name="Latreille P."/>
            <person name="Courtney L."/>
            <person name="Cloud J."/>
            <person name="Abbott A."/>
            <person name="Scott K."/>
            <person name="Johnson D."/>
            <person name="Minx P."/>
            <person name="Bentley D."/>
            <person name="Fulton B."/>
            <person name="Miller N."/>
            <person name="Greco T."/>
            <person name="Kemp K."/>
            <person name="Kramer J."/>
            <person name="Fulton L."/>
            <person name="Mardis E."/>
            <person name="Dante M."/>
            <person name="Pepin K."/>
            <person name="Hillier L.W."/>
            <person name="Nelson J."/>
            <person name="Spieth J."/>
            <person name="Ryan E."/>
            <person name="Andrews S."/>
            <person name="Geisel C."/>
            <person name="Layman D."/>
            <person name="Du H."/>
            <person name="Ali J."/>
            <person name="Berghoff A."/>
            <person name="Jones K."/>
            <person name="Drone K."/>
            <person name="Cotton M."/>
            <person name="Joshu C."/>
            <person name="Antonoiu B."/>
            <person name="Zidanic M."/>
            <person name="Strong C."/>
            <person name="Sun H."/>
            <person name="Lamar B."/>
            <person name="Yordan C."/>
            <person name="Ma P."/>
            <person name="Zhong J."/>
            <person name="Preston R."/>
            <person name="Vil D."/>
            <person name="Shekher M."/>
            <person name="Matero A."/>
            <person name="Shah R."/>
            <person name="Swaby I.K."/>
            <person name="O'Shaughnessy A."/>
            <person name="Rodriguez M."/>
            <person name="Hoffman J."/>
            <person name="Till S."/>
            <person name="Granat S."/>
            <person name="Shohdy N."/>
            <person name="Hasegawa A."/>
            <person name="Hameed A."/>
            <person name="Lodhi M."/>
            <person name="Johnson A."/>
            <person name="Chen E."/>
            <person name="Marra M.A."/>
            <person name="Martienssen R."/>
            <person name="McCombie W.R."/>
        </authorList>
    </citation>
    <scope>NUCLEOTIDE SEQUENCE [LARGE SCALE GENOMIC DNA]</scope>
    <source>
        <strain>cv. Columbia</strain>
    </source>
</reference>
<reference key="2">
    <citation type="journal article" date="2017" name="Plant J.">
        <title>Araport11: a complete reannotation of the Arabidopsis thaliana reference genome.</title>
        <authorList>
            <person name="Cheng C.Y."/>
            <person name="Krishnakumar V."/>
            <person name="Chan A.P."/>
            <person name="Thibaud-Nissen F."/>
            <person name="Schobel S."/>
            <person name="Town C.D."/>
        </authorList>
    </citation>
    <scope>GENOME REANNOTATION</scope>
    <source>
        <strain>cv. Columbia</strain>
    </source>
</reference>
<reference key="3">
    <citation type="journal article" date="2003" name="Science">
        <title>Empirical analysis of transcriptional activity in the Arabidopsis genome.</title>
        <authorList>
            <person name="Yamada K."/>
            <person name="Lim J."/>
            <person name="Dale J.M."/>
            <person name="Chen H."/>
            <person name="Shinn P."/>
            <person name="Palm C.J."/>
            <person name="Southwick A.M."/>
            <person name="Wu H.C."/>
            <person name="Kim C.J."/>
            <person name="Nguyen M."/>
            <person name="Pham P.K."/>
            <person name="Cheuk R.F."/>
            <person name="Karlin-Newmann G."/>
            <person name="Liu S.X."/>
            <person name="Lam B."/>
            <person name="Sakano H."/>
            <person name="Wu T."/>
            <person name="Yu G."/>
            <person name="Miranda M."/>
            <person name="Quach H.L."/>
            <person name="Tripp M."/>
            <person name="Chang C.H."/>
            <person name="Lee J.M."/>
            <person name="Toriumi M.J."/>
            <person name="Chan M.M."/>
            <person name="Tang C.C."/>
            <person name="Onodera C.S."/>
            <person name="Deng J.M."/>
            <person name="Akiyama K."/>
            <person name="Ansari Y."/>
            <person name="Arakawa T."/>
            <person name="Banh J."/>
            <person name="Banno F."/>
            <person name="Bowser L."/>
            <person name="Brooks S.Y."/>
            <person name="Carninci P."/>
            <person name="Chao Q."/>
            <person name="Choy N."/>
            <person name="Enju A."/>
            <person name="Goldsmith A.D."/>
            <person name="Gurjal M."/>
            <person name="Hansen N.F."/>
            <person name="Hayashizaki Y."/>
            <person name="Johnson-Hopson C."/>
            <person name="Hsuan V.W."/>
            <person name="Iida K."/>
            <person name="Karnes M."/>
            <person name="Khan S."/>
            <person name="Koesema E."/>
            <person name="Ishida J."/>
            <person name="Jiang P.X."/>
            <person name="Jones T."/>
            <person name="Kawai J."/>
            <person name="Kamiya A."/>
            <person name="Meyers C."/>
            <person name="Nakajima M."/>
            <person name="Narusaka M."/>
            <person name="Seki M."/>
            <person name="Sakurai T."/>
            <person name="Satou M."/>
            <person name="Tamse R."/>
            <person name="Vaysberg M."/>
            <person name="Wallender E.K."/>
            <person name="Wong C."/>
            <person name="Yamamura Y."/>
            <person name="Yuan S."/>
            <person name="Shinozaki K."/>
            <person name="Davis R.W."/>
            <person name="Theologis A."/>
            <person name="Ecker J.R."/>
        </authorList>
    </citation>
    <scope>NUCLEOTIDE SEQUENCE [LARGE SCALE MRNA]</scope>
    <source>
        <strain>cv. Columbia</strain>
    </source>
</reference>
<reference key="4">
    <citation type="submission" date="2002-03" db="EMBL/GenBank/DDBJ databases">
        <title>Full-length cDNA from Arabidopsis thaliana.</title>
        <authorList>
            <person name="Brover V.V."/>
            <person name="Troukhan M.E."/>
            <person name="Alexandrov N.A."/>
            <person name="Lu Y.-P."/>
            <person name="Flavell R.B."/>
            <person name="Feldmann K.A."/>
        </authorList>
    </citation>
    <scope>NUCLEOTIDE SEQUENCE [LARGE SCALE MRNA]</scope>
</reference>
<reference key="5">
    <citation type="journal article" date="2002" name="Plant Mol. Biol.">
        <title>Auxin-responsive gene expression: genes, promoters and regulatory factors.</title>
        <authorList>
            <person name="Hagen G."/>
            <person name="Guilfoyle T.J."/>
        </authorList>
    </citation>
    <scope>GENE FAMILY</scope>
    <scope>NOMENCLATURE</scope>
</reference>
<reference key="6">
    <citation type="journal article" date="2006" name="Cell">
        <title>Different plant hormones regulate similar processes through largely nonoverlapping transcriptional responses.</title>
        <authorList>
            <person name="Nemhauser J.L."/>
            <person name="Hong F."/>
            <person name="Chory J."/>
        </authorList>
    </citation>
    <scope>INDUCTION BY AUXIN</scope>
</reference>
<reference key="7">
    <citation type="journal article" date="2006" name="Proc. Natl. Acad. Sci. U.S.A.">
        <title>A gradient of auxin and auxin-dependent transcription precedes tropic growth responses.</title>
        <authorList>
            <person name="Esmon C.A."/>
            <person name="Tinsley A.G."/>
            <person name="Ljung K."/>
            <person name="Sandberg G."/>
            <person name="Hearne L.B."/>
            <person name="Liscum E."/>
        </authorList>
    </citation>
    <scope>INDUCTION BY AUXIN; ARF7 AND TROPIC STIMULUS</scope>
</reference>
<reference key="8">
    <citation type="journal article" date="2012" name="Annu. Rev. Genet.">
        <title>Brassinosteroid signaling network and regulation of photomorphogenesis.</title>
        <authorList>
            <person name="Wang Z.Y."/>
            <person name="Bai M.Y."/>
            <person name="Oh E."/>
            <person name="Zhu J.Y."/>
        </authorList>
    </citation>
    <scope>INDUCTION BY HORMONES</scope>
    <scope>INTERACTION WITH BZR1</scope>
</reference>
<reference key="9">
    <citation type="journal article" date="2015" name="Mol. Plant">
        <title>SAUR proteins as effectors of hormonal and environmental signals in plant growth.</title>
        <authorList>
            <person name="Ren H."/>
            <person name="Gray W.M."/>
        </authorList>
    </citation>
    <scope>FUNCTION</scope>
</reference>
<reference key="10">
    <citation type="journal article" date="2017" name="BMC Plant Biol.">
        <title>Divergent regulation of Arabidopsis SAUR genes: a focus on the SAUR10-clade.</title>
        <authorList>
            <person name="van Mourik H."/>
            <person name="van Dijk A.D.J."/>
            <person name="Stortenbeker N."/>
            <person name="Angenent G.C."/>
            <person name="Bemer M."/>
        </authorList>
    </citation>
    <scope>TISSUE SPECIFICITY</scope>
    <scope>DEVELOPMENTAL STAGE</scope>
    <scope>INDUCTION BY AUXIN; BRASSINOSTEROIDS AND ZEATIN</scope>
    <scope>GENE FAMILY</scope>
    <source>
        <strain>cv. Columbia</strain>
    </source>
</reference>
<name>SAU50_ARATH</name>
<comment type="function">
    <text evidence="1 3 10">Provide a mechanistic link between auxin and plasma membrane H(+)-ATPases (PM H(+)-ATPases, e.g. AHA1 and AHA2), and triggers PM H(+)-ATPases activity by promoting phosphorylation of their C-terminal autoinhibitory domain as a result of PP2C-D subfamily of type 2C phosphatases inhibition, thus leading to the acidification of the apoplast and the facilitation of solutes and water uptake to drive cell expansion (By similarity). Triggers plant growth probably by promoting cell elongation (By similarity). Regulates branch angles and bending (By similarity). Effector of hormonal and environmental signals in plant growth (Probable).</text>
</comment>
<comment type="subunit">
    <text evidence="6">Interacts with BZR1.</text>
</comment>
<comment type="subcellular location">
    <subcellularLocation>
        <location evidence="2">Cell membrane</location>
        <topology evidence="2">Peripheral membrane protein</topology>
    </subcellularLocation>
</comment>
<comment type="tissue specificity">
    <text evidence="7">Expressed in cotyledons, leaves, flowers and siliques.</text>
</comment>
<comment type="developmental stage">
    <text evidence="7">In flowers, present in stamen, petals and stigma.</text>
</comment>
<comment type="induction">
    <text evidence="4 5 6 7">Up-regulated by brassinosteroids and gibberellins (PubMed:23020777, PubMed:29258424). Up-regulated by auxin (PubMed:16371470, PubMed:16901781, PubMed:29258424). Up-regulated by phototropism and gravitropism in the region of the hypocotyl farthest form the incident stimulation (PubMed:16371470). Transcriptionally regulated by ARF7 (PubMed:16371470). Down-regulated by abscisic acid and methyl jasmonate (PubMed:23020777). Induced by zeatin (PubMed:29258424).</text>
</comment>
<comment type="similarity">
    <text evidence="9">Belongs to the ARG7 family.</text>
</comment>
<sequence length="107" mass="12139">MAIMKKTSKLTQTAMLKQILKRCSSLGKKNGGGYDEDCLPLDVPKGHFPVYVGENRSRYIVPISFLTHPEFQSLLQRAEEEFGFDHDMGLTIPCDELVFQTLTSMIR</sequence>